<reference key="1">
    <citation type="journal article" date="1987" name="Jpn. J. Genet.">
        <title>The entire nucleotide sequence of baboon endogenous virus DNA: a chimeric genome structure of murine type C and simian type D retroviruses.</title>
        <authorList>
            <person name="Kato S."/>
            <person name="Matsuo K."/>
            <person name="Nishimura N."/>
            <person name="Takahashi N."/>
            <person name="Takano T."/>
        </authorList>
    </citation>
    <scope>NUCLEOTIDE SEQUENCE [GENOMIC DNA]</scope>
</reference>
<reference key="2">
    <citation type="journal article" date="1983" name="J. Virol.">
        <title>Provirus of M7 baboon endogenous virus: nucleotide sequence of the gag-pol region.</title>
        <authorList>
            <person name="Tamura T."/>
        </authorList>
    </citation>
    <scope>NUCLEOTIDE SEQUENCE [GENOMIC DNA]</scope>
</reference>
<organismHost>
    <name type="scientific">Papio</name>
    <name type="common">baboons</name>
    <dbReference type="NCBI Taxonomy" id="9554"/>
</organismHost>
<organismHost>
    <name type="scientific">Theropithecus gelada</name>
    <name type="common">Gelada baboon</name>
    <dbReference type="NCBI Taxonomy" id="9565"/>
</organismHost>
<keyword id="KW-0167">Capsid protein</keyword>
<keyword id="KW-1032">Host cell membrane</keyword>
<keyword id="KW-1035">Host cytoplasm</keyword>
<keyword id="KW-1039">Host endosome</keyword>
<keyword id="KW-1043">Host membrane</keyword>
<keyword id="KW-0945">Host-virus interaction</keyword>
<keyword id="KW-0449">Lipoprotein</keyword>
<keyword id="KW-0472">Membrane</keyword>
<keyword id="KW-0479">Metal-binding</keyword>
<keyword id="KW-0519">Myristate</keyword>
<keyword id="KW-0597">Phosphoprotein</keyword>
<keyword id="KW-0694">RNA-binding</keyword>
<keyword id="KW-1198">Viral budding</keyword>
<keyword id="KW-1187">Viral budding via the host ESCRT complexes</keyword>
<keyword id="KW-0468">Viral matrix protein</keyword>
<keyword id="KW-0543">Viral nucleoprotein</keyword>
<keyword id="KW-1188">Viral release from host cell</keyword>
<keyword id="KW-0946">Virion</keyword>
<keyword id="KW-0862">Zinc</keyword>
<keyword id="KW-0863">Zinc-finger</keyword>
<accession>P03341</accession>
<accession>P10268</accession>
<proteinExistence type="inferred from homology"/>
<evidence type="ECO:0000250" key="1"/>
<evidence type="ECO:0000250" key="2">
    <source>
        <dbReference type="UniProtKB" id="P03332"/>
    </source>
</evidence>
<evidence type="ECO:0000250" key="3">
    <source>
        <dbReference type="UniProtKB" id="P03336"/>
    </source>
</evidence>
<evidence type="ECO:0000250" key="4">
    <source>
        <dbReference type="UniProtKB" id="P26807"/>
    </source>
</evidence>
<evidence type="ECO:0000255" key="5"/>
<evidence type="ECO:0000255" key="6">
    <source>
        <dbReference type="PROSITE-ProRule" id="PRU00047"/>
    </source>
</evidence>
<evidence type="ECO:0000256" key="7">
    <source>
        <dbReference type="SAM" id="MobiDB-lite"/>
    </source>
</evidence>
<evidence type="ECO:0000305" key="8"/>
<gene>
    <name type="primary">gag</name>
</gene>
<sequence length="537" mass="60624">MGQTLTTPLSLTLTHFSDVRARAHNLSVGVRKGRWQTFCSSEWPTLHVGWPRDGTFDLSVILQVKTKVMDPGPHGHPDQVAYIITWEDLVRNPPPWVKPFLHTPSTSKSTLLALEVPKNRTLDPPKPVLPDESQQDLLFQDPLPHPPHNPLLEPPPYNSPSPPVLSPVSPTTPSAPTPSSLVSSSTPPSSPAPPELTPRTPPQTPRLRLRRAEGQDGPSTWQSSLFPLRTVNRTIQYWPFSASDLYNWKTHNPSFSQDPQALTSLIESILLTHQPTWDDCQQLLQVLLTTEERQRVLLEARKNVPGPGGLPTQLPNEIDEGFPLTRPDWDYETAPGRESLRIYRQALLAGLKGAGKRPTNLAKVRTITQGKDESPAAFMERLLEGFRMYTPFDPEAPEHKATVAMSFIDQAALDIKGKLQRLDGIQTHGLQELVREAEKVYNKRETPEEREARLIKEQEEREDRRDRKRDKHLTKILAAVVTEKRAGKSGETRRRPKVDKDQCAYCKERGHWIKDCPKRPRDQKKPAPVLTLGEDSE</sequence>
<dbReference type="EMBL" id="D10032">
    <property type="protein sequence ID" value="BAA00923.1"/>
    <property type="molecule type" value="Genomic_DNA"/>
</dbReference>
<dbReference type="EMBL" id="X05470">
    <property type="protein sequence ID" value="CAA29027.1"/>
    <property type="molecule type" value="Genomic_DNA"/>
</dbReference>
<dbReference type="EMBL" id="J02034">
    <property type="status" value="NOT_ANNOTATED_CDS"/>
    <property type="molecule type" value="Genomic_DNA"/>
</dbReference>
<dbReference type="PIR" id="A03939">
    <property type="entry name" value="FOMVVB"/>
</dbReference>
<dbReference type="PIR" id="JT0260">
    <property type="entry name" value="FOMVM7"/>
</dbReference>
<dbReference type="RefSeq" id="YP_009109690.1">
    <property type="nucleotide sequence ID" value="NC_022517.1"/>
</dbReference>
<dbReference type="SMR" id="P03341"/>
<dbReference type="GeneID" id="22318532"/>
<dbReference type="KEGG" id="vg:22318532"/>
<dbReference type="Proteomes" id="UP000007443">
    <property type="component" value="Genome"/>
</dbReference>
<dbReference type="GO" id="GO:0044185">
    <property type="term" value="C:host cell late endosome membrane"/>
    <property type="evidence" value="ECO:0007669"/>
    <property type="project" value="UniProtKB-SubCell"/>
</dbReference>
<dbReference type="GO" id="GO:0020002">
    <property type="term" value="C:host cell plasma membrane"/>
    <property type="evidence" value="ECO:0007669"/>
    <property type="project" value="UniProtKB-SubCell"/>
</dbReference>
<dbReference type="GO" id="GO:0072494">
    <property type="term" value="C:host multivesicular body"/>
    <property type="evidence" value="ECO:0007669"/>
    <property type="project" value="UniProtKB-SubCell"/>
</dbReference>
<dbReference type="GO" id="GO:0016020">
    <property type="term" value="C:membrane"/>
    <property type="evidence" value="ECO:0007669"/>
    <property type="project" value="UniProtKB-KW"/>
</dbReference>
<dbReference type="GO" id="GO:0019013">
    <property type="term" value="C:viral nucleocapsid"/>
    <property type="evidence" value="ECO:0007669"/>
    <property type="project" value="UniProtKB-KW"/>
</dbReference>
<dbReference type="GO" id="GO:0003723">
    <property type="term" value="F:RNA binding"/>
    <property type="evidence" value="ECO:0007669"/>
    <property type="project" value="UniProtKB-KW"/>
</dbReference>
<dbReference type="GO" id="GO:0039660">
    <property type="term" value="F:structural constituent of virion"/>
    <property type="evidence" value="ECO:0007669"/>
    <property type="project" value="UniProtKB-KW"/>
</dbReference>
<dbReference type="GO" id="GO:0008270">
    <property type="term" value="F:zinc ion binding"/>
    <property type="evidence" value="ECO:0007669"/>
    <property type="project" value="UniProtKB-KW"/>
</dbReference>
<dbReference type="GO" id="GO:0039702">
    <property type="term" value="P:viral budding via host ESCRT complex"/>
    <property type="evidence" value="ECO:0007669"/>
    <property type="project" value="UniProtKB-KW"/>
</dbReference>
<dbReference type="Gene3D" id="1.10.150.180">
    <property type="entry name" value="Gamma-retroviral matrix domain"/>
    <property type="match status" value="1"/>
</dbReference>
<dbReference type="Gene3D" id="1.10.375.10">
    <property type="entry name" value="Human Immunodeficiency Virus Type 1 Capsid Protein"/>
    <property type="match status" value="1"/>
</dbReference>
<dbReference type="Gene3D" id="4.10.60.10">
    <property type="entry name" value="Zinc finger, CCHC-type"/>
    <property type="match status" value="1"/>
</dbReference>
<dbReference type="InterPro" id="IPR000840">
    <property type="entry name" value="G_retro_matrix"/>
</dbReference>
<dbReference type="InterPro" id="IPR036946">
    <property type="entry name" value="G_retro_matrix_sf"/>
</dbReference>
<dbReference type="InterPro" id="IPR003036">
    <property type="entry name" value="Gag_P30"/>
</dbReference>
<dbReference type="InterPro" id="IPR008919">
    <property type="entry name" value="Retrov_capsid_N"/>
</dbReference>
<dbReference type="InterPro" id="IPR050462">
    <property type="entry name" value="Retroviral_Gag-Pol_poly"/>
</dbReference>
<dbReference type="InterPro" id="IPR010999">
    <property type="entry name" value="Retrovr_matrix"/>
</dbReference>
<dbReference type="InterPro" id="IPR001878">
    <property type="entry name" value="Znf_CCHC"/>
</dbReference>
<dbReference type="InterPro" id="IPR036875">
    <property type="entry name" value="Znf_CCHC_sf"/>
</dbReference>
<dbReference type="PANTHER" id="PTHR33166">
    <property type="entry name" value="GAG_P30 DOMAIN-CONTAINING PROTEIN"/>
    <property type="match status" value="1"/>
</dbReference>
<dbReference type="Pfam" id="PF01140">
    <property type="entry name" value="Gag_MA"/>
    <property type="match status" value="1"/>
</dbReference>
<dbReference type="Pfam" id="PF02093">
    <property type="entry name" value="Gag_p30"/>
    <property type="match status" value="1"/>
</dbReference>
<dbReference type="Pfam" id="PF00098">
    <property type="entry name" value="zf-CCHC"/>
    <property type="match status" value="1"/>
</dbReference>
<dbReference type="SMART" id="SM00343">
    <property type="entry name" value="ZnF_C2HC"/>
    <property type="match status" value="1"/>
</dbReference>
<dbReference type="SUPFAM" id="SSF47836">
    <property type="entry name" value="Retroviral matrix proteins"/>
    <property type="match status" value="1"/>
</dbReference>
<dbReference type="SUPFAM" id="SSF47943">
    <property type="entry name" value="Retrovirus capsid protein, N-terminal core domain"/>
    <property type="match status" value="1"/>
</dbReference>
<dbReference type="SUPFAM" id="SSF57756">
    <property type="entry name" value="Retrovirus zinc finger-like domains"/>
    <property type="match status" value="1"/>
</dbReference>
<dbReference type="PROSITE" id="PS50158">
    <property type="entry name" value="ZF_CCHC"/>
    <property type="match status" value="1"/>
</dbReference>
<comment type="function">
    <molecule>Gag polyprotein</molecule>
    <text evidence="2">Plays a role in budding and is processed by the viral protease during virion maturation outside the cell. During budding, it recruits, in a PPXY-dependent or independent manner, Nedd4-like ubiquitin ligases that conjugate ubiquitin molecules to Gag, or to Gag binding host factors. Interaction with HECT ubiquitin ligases probably links the viral protein to the host ESCRT pathway and facilitates release.</text>
</comment>
<comment type="function">
    <molecule>Matrix protein p15</molecule>
    <text evidence="2">Targets Gag and gag-pol polyproteins to the plasma membrane via a multipartite membrane binding signal, that includes its myristoylated N-terminus. Also mediates nuclear localization of the pre-integration complex.</text>
</comment>
<comment type="function">
    <molecule>RNA-binding phosphoprotein p12</molecule>
    <text evidence="2">Constituent of the pre-integration complex (PIC) which tethers the latter to mitotic chromosomes.</text>
</comment>
<comment type="function">
    <molecule>Capsid protein p30</molecule>
    <text evidence="3">Forms the spherical core of the virion that encapsulates the genomic RNA-nucleocapsid complex.</text>
</comment>
<comment type="function">
    <molecule>Nucleocapsid protein p10-Gag</molecule>
    <text evidence="2">Involved in the packaging and encapsidation of two copies of the genome. Binds with high affinity to conserved elements within the packaging signal, located near the 5'-end of the genome. This binding is dependent on genome dimerization.</text>
</comment>
<comment type="subunit">
    <molecule>Capsid protein p30</molecule>
    <text evidence="2 3">Homohexamer; further associates as homomultimer. The virus core is composed of a lattice formed from hexagonal rings, each containing six capsid monomers.</text>
</comment>
<comment type="subunit">
    <molecule>Gag polyprotein</molecule>
    <text evidence="2">Interacts (via PPXY motif) with host NEDD4. Interacts (via PSAP motif) with host TSG101.</text>
</comment>
<comment type="subcellular location">
    <molecule>Gag polyprotein</molecule>
    <subcellularLocation>
        <location evidence="2">Virion</location>
    </subcellularLocation>
    <subcellularLocation>
        <location evidence="2">Host cell membrane</location>
        <topology evidence="2">Lipid-anchor</topology>
    </subcellularLocation>
    <subcellularLocation>
        <location evidence="2">Host late endosome membrane</location>
        <topology evidence="2">Lipid-anchor</topology>
    </subcellularLocation>
    <subcellularLocation>
        <location evidence="4">Host endosome</location>
        <location evidence="4">Host multivesicular body</location>
    </subcellularLocation>
    <text evidence="8">These locations are probably linked to virus assembly sites.</text>
</comment>
<comment type="subcellular location">
    <molecule>Matrix protein p15</molecule>
    <subcellularLocation>
        <location evidence="2">Virion</location>
    </subcellularLocation>
</comment>
<comment type="subcellular location">
    <molecule>Capsid protein p30</molecule>
    <subcellularLocation>
        <location evidence="2">Virion</location>
    </subcellularLocation>
</comment>
<comment type="subcellular location">
    <molecule>Nucleocapsid protein p10-Gag</molecule>
    <subcellularLocation>
        <location evidence="2">Virion</location>
    </subcellularLocation>
</comment>
<comment type="subcellular location">
    <molecule>RNA-binding phosphoprotein p12</molecule>
    <subcellularLocation>
        <location evidence="2">Host cytoplasm</location>
    </subcellularLocation>
    <text evidence="2">Localizes to the host cytoplasm early in infection and binds to the mitotic chromosomes later on.</text>
</comment>
<comment type="domain">
    <molecule>Gag polyprotein</molecule>
    <text evidence="1">Late-budding domains (L domains) are short sequence motifs essential for viral particle budding. They recruit proteins of the host ESCRT machinery (Endosomal Sorting Complex Required for Transport) or ESCRT-associated proteins. RNA-binding phosphoprotein p12 contains two L domain: a PPXY motif which potentially interacts with the WW domain 3 of NEDD4 E3 ubiquitin ligase and a PTAP/PSAP motif, which potentially interacts with the UEV domain of TSG101 (By similarity).</text>
</comment>
<comment type="PTM">
    <molecule>Gag polyprotein</molecule>
    <text evidence="2">Specific enzymatic cleavages by the viral protease yield mature proteins. The protease is released by autocatalytic cleavage. The polyprotein is cleaved during and after budding, this process is termed maturation.</text>
</comment>
<comment type="PTM">
    <text evidence="2">RNA-binding phosphoprotein p12 is phosphorylated on serine residues.</text>
</comment>
<comment type="sequence caution" evidence="8">
    <conflict type="miscellaneous discrepancy">
        <sequence resource="EMBL" id="J02034"/>
    </conflict>
    <text>Several errors.</text>
</comment>
<feature type="initiator methionine" description="Removed; by host" evidence="5">
    <location>
        <position position="1"/>
    </location>
</feature>
<feature type="chain" id="PRO_0000390797" description="Gag polyprotein">
    <location>
        <begin position="2"/>
        <end position="537"/>
    </location>
</feature>
<feature type="chain" id="PRO_0000040826" description="Matrix protein p15">
    <location>
        <begin position="2"/>
        <end position="145"/>
    </location>
</feature>
<feature type="chain" id="PRO_0000040827" description="RNA-binding phosphoprotein p12">
    <location>
        <begin position="146"/>
        <end position="226"/>
    </location>
</feature>
<feature type="chain" id="PRO_0000040828" description="Capsid protein p30">
    <location>
        <begin position="227"/>
        <end position="477"/>
    </location>
</feature>
<feature type="chain" id="PRO_0000040829" description="Nucleocapsid protein p10-Gag">
    <location>
        <begin position="478"/>
        <end position="537"/>
    </location>
</feature>
<feature type="zinc finger region" description="CCHC-type" evidence="6">
    <location>
        <begin position="501"/>
        <end position="518"/>
    </location>
</feature>
<feature type="region of interest" description="Disordered" evidence="7">
    <location>
        <begin position="137"/>
        <end position="221"/>
    </location>
</feature>
<feature type="region of interest" description="Disordered" evidence="7">
    <location>
        <begin position="302"/>
        <end position="322"/>
    </location>
</feature>
<feature type="region of interest" description="Disordered" evidence="7">
    <location>
        <begin position="443"/>
        <end position="471"/>
    </location>
</feature>
<feature type="region of interest" description="Disordered" evidence="7">
    <location>
        <begin position="514"/>
        <end position="537"/>
    </location>
</feature>
<feature type="short sequence motif" description="PPXY motif" evidence="8">
    <location>
        <begin position="154"/>
        <end position="157"/>
    </location>
</feature>
<feature type="short sequence motif" description="PTAP/PSAP motif" evidence="8">
    <location>
        <begin position="173"/>
        <end position="176"/>
    </location>
</feature>
<feature type="compositionally biased region" description="Pro residues" evidence="7">
    <location>
        <begin position="143"/>
        <end position="165"/>
    </location>
</feature>
<feature type="compositionally biased region" description="Low complexity" evidence="7">
    <location>
        <begin position="166"/>
        <end position="187"/>
    </location>
</feature>
<feature type="compositionally biased region" description="Pro residues" evidence="7">
    <location>
        <begin position="188"/>
        <end position="204"/>
    </location>
</feature>
<feature type="compositionally biased region" description="Basic and acidic residues" evidence="7">
    <location>
        <begin position="443"/>
        <end position="465"/>
    </location>
</feature>
<feature type="compositionally biased region" description="Basic and acidic residues" evidence="7">
    <location>
        <begin position="514"/>
        <end position="525"/>
    </location>
</feature>
<feature type="site" description="Cleavage; by viral protease" evidence="2">
    <location>
        <begin position="145"/>
        <end position="146"/>
    </location>
</feature>
<feature type="site" description="Cleavage; by viral protease" evidence="2">
    <location>
        <begin position="226"/>
        <end position="227"/>
    </location>
</feature>
<feature type="site" description="Cleavage; by viral protease" evidence="2">
    <location>
        <begin position="477"/>
        <end position="478"/>
    </location>
</feature>
<feature type="lipid moiety-binding region" description="N-myristoyl glycine; by host" evidence="5">
    <location>
        <position position="2"/>
    </location>
</feature>
<organism>
    <name type="scientific">Baboon endogenous virus (strain M7)</name>
    <dbReference type="NCBI Taxonomy" id="11764"/>
    <lineage>
        <taxon>Viruses</taxon>
        <taxon>Riboviria</taxon>
        <taxon>Pararnavirae</taxon>
        <taxon>Artverviricota</taxon>
        <taxon>Revtraviricetes</taxon>
        <taxon>Ortervirales</taxon>
        <taxon>Retroviridae</taxon>
        <taxon>Orthoretrovirinae</taxon>
        <taxon>Gammaretrovirus</taxon>
        <taxon>Baboon endogenous virus</taxon>
    </lineage>
</organism>
<name>GAG_BAEVM</name>
<protein>
    <recommendedName>
        <fullName>Gag polyprotein</fullName>
    </recommendedName>
    <alternativeName>
        <fullName>Core polyprotein</fullName>
    </alternativeName>
    <component>
        <recommendedName>
            <fullName>Matrix protein p15</fullName>
            <shortName>MA</shortName>
        </recommendedName>
    </component>
    <component>
        <recommendedName>
            <fullName>RNA-binding phosphoprotein p12</fullName>
        </recommendedName>
        <alternativeName>
            <fullName>pp12</fullName>
        </alternativeName>
    </component>
    <component>
        <recommendedName>
            <fullName>Capsid protein p30</fullName>
            <shortName>CA</shortName>
        </recommendedName>
    </component>
    <component>
        <recommendedName>
            <fullName>Nucleocapsid protein p10-Gag</fullName>
            <shortName>NC-gag</shortName>
        </recommendedName>
    </component>
</protein>